<accession>B7V5C7</accession>
<organism>
    <name type="scientific">Pseudomonas aeruginosa (strain LESB58)</name>
    <dbReference type="NCBI Taxonomy" id="557722"/>
    <lineage>
        <taxon>Bacteria</taxon>
        <taxon>Pseudomonadati</taxon>
        <taxon>Pseudomonadota</taxon>
        <taxon>Gammaproteobacteria</taxon>
        <taxon>Pseudomonadales</taxon>
        <taxon>Pseudomonadaceae</taxon>
        <taxon>Pseudomonas</taxon>
    </lineage>
</organism>
<reference key="1">
    <citation type="journal article" date="2009" name="Genome Res.">
        <title>Newly introduced genomic prophage islands are critical determinants of in vivo competitiveness in the Liverpool epidemic strain of Pseudomonas aeruginosa.</title>
        <authorList>
            <person name="Winstanley C."/>
            <person name="Langille M.G.I."/>
            <person name="Fothergill J.L."/>
            <person name="Kukavica-Ibrulj I."/>
            <person name="Paradis-Bleau C."/>
            <person name="Sanschagrin F."/>
            <person name="Thomson N.R."/>
            <person name="Winsor G.L."/>
            <person name="Quail M.A."/>
            <person name="Lennard N."/>
            <person name="Bignell A."/>
            <person name="Clarke L."/>
            <person name="Seeger K."/>
            <person name="Saunders D."/>
            <person name="Harris D."/>
            <person name="Parkhill J."/>
            <person name="Hancock R.E.W."/>
            <person name="Brinkman F.S.L."/>
            <person name="Levesque R.C."/>
        </authorList>
    </citation>
    <scope>NUCLEOTIDE SEQUENCE [LARGE SCALE GENOMIC DNA]</scope>
    <source>
        <strain>LESB58</strain>
    </source>
</reference>
<feature type="chain" id="PRO_1000186719" description="3-octaprenyl-4-hydroxybenzoate carboxy-lyase">
    <location>
        <begin position="1"/>
        <end position="488"/>
    </location>
</feature>
<feature type="active site" description="Proton donor" evidence="1">
    <location>
        <position position="287"/>
    </location>
</feature>
<feature type="binding site" evidence="1">
    <location>
        <position position="172"/>
    </location>
    <ligand>
        <name>Mn(2+)</name>
        <dbReference type="ChEBI" id="CHEBI:29035"/>
    </ligand>
</feature>
<feature type="binding site" evidence="1">
    <location>
        <begin position="175"/>
        <end position="177"/>
    </location>
    <ligand>
        <name>prenylated FMN</name>
        <dbReference type="ChEBI" id="CHEBI:87746"/>
    </ligand>
</feature>
<feature type="binding site" evidence="1">
    <location>
        <begin position="189"/>
        <end position="191"/>
    </location>
    <ligand>
        <name>prenylated FMN</name>
        <dbReference type="ChEBI" id="CHEBI:87746"/>
    </ligand>
</feature>
<feature type="binding site" evidence="1">
    <location>
        <begin position="194"/>
        <end position="195"/>
    </location>
    <ligand>
        <name>prenylated FMN</name>
        <dbReference type="ChEBI" id="CHEBI:87746"/>
    </ligand>
</feature>
<feature type="binding site" evidence="1">
    <location>
        <position position="238"/>
    </location>
    <ligand>
        <name>Mn(2+)</name>
        <dbReference type="ChEBI" id="CHEBI:29035"/>
    </ligand>
</feature>
<protein>
    <recommendedName>
        <fullName evidence="1">3-octaprenyl-4-hydroxybenzoate carboxy-lyase</fullName>
        <ecNumber evidence="1">4.1.1.98</ecNumber>
    </recommendedName>
    <alternativeName>
        <fullName evidence="1">Polyprenyl p-hydroxybenzoate decarboxylase</fullName>
    </alternativeName>
</protein>
<keyword id="KW-1003">Cell membrane</keyword>
<keyword id="KW-0210">Decarboxylase</keyword>
<keyword id="KW-0285">Flavoprotein</keyword>
<keyword id="KW-0288">FMN</keyword>
<keyword id="KW-0456">Lyase</keyword>
<keyword id="KW-0464">Manganese</keyword>
<keyword id="KW-0472">Membrane</keyword>
<keyword id="KW-0479">Metal-binding</keyword>
<keyword id="KW-0831">Ubiquinone biosynthesis</keyword>
<name>UBID_PSEA8</name>
<sequence>MTFKDLRDFIAQLEQRGALKRIQVPISPVLEMTEVCDRTLRAKGPALLFEKPTGFDMPVLGNLFGTPERVALGMGAEDVGALREIGKLLAQLKEPEPPKGLKDAWAKLPMYRKVLSMAPKVLKDAPCQEVVEEGEDVDLGRLPVQTCWPGDVGPLITWGLTVTRGPNKERQNLGIYRQQVIGRNKVIMRWLSHRGGALDYREWCQKHPGQPYPVAVALGADPATILGAVTPVPDTLSEYAFAGLLRGHRTELVKCRGSDLQVPASAEIVLEGVIHPGEMADEGPYGDHTGYYNEVDRFPVFTVERVTRRQKPIYHSTYTGRPPDEPAILGVALNEVFVPILQKQFPEIVDFYLPPEGCSYRMAVVTMKKQYPGHAKRVMLGVWSFLRQFMYTKFVIVTDDDIDARDWNDVIWAITTRMDPKRDTVMIDNTPIDYLDFASPVSGLGSKMGLDATHKWPGETSREWGRAIVKDEAVTRRIDALWSSLGID</sequence>
<proteinExistence type="inferred from homology"/>
<comment type="function">
    <text evidence="1">Catalyzes the decarboxylation of 3-octaprenyl-4-hydroxy benzoate to 2-octaprenylphenol, an intermediate step in ubiquinone biosynthesis.</text>
</comment>
<comment type="catalytic activity">
    <reaction evidence="1">
        <text>a 4-hydroxy-3-(all-trans-polyprenyl)benzoate + H(+) = a 2-(all-trans-polyprenyl)phenol + CO2</text>
        <dbReference type="Rhea" id="RHEA:41680"/>
        <dbReference type="Rhea" id="RHEA-COMP:9514"/>
        <dbReference type="Rhea" id="RHEA-COMP:9516"/>
        <dbReference type="ChEBI" id="CHEBI:1269"/>
        <dbReference type="ChEBI" id="CHEBI:15378"/>
        <dbReference type="ChEBI" id="CHEBI:16526"/>
        <dbReference type="ChEBI" id="CHEBI:78396"/>
        <dbReference type="EC" id="4.1.1.98"/>
    </reaction>
</comment>
<comment type="cofactor">
    <cofactor evidence="1">
        <name>prenylated FMN</name>
        <dbReference type="ChEBI" id="CHEBI:87746"/>
    </cofactor>
    <text evidence="1">Binds 1 prenylated FMN per subunit.</text>
</comment>
<comment type="cofactor">
    <cofactor evidence="1">
        <name>Mn(2+)</name>
        <dbReference type="ChEBI" id="CHEBI:29035"/>
    </cofactor>
</comment>
<comment type="pathway">
    <text evidence="1">Cofactor biosynthesis; ubiquinone biosynthesis.</text>
</comment>
<comment type="subunit">
    <text evidence="1">Homohexamer.</text>
</comment>
<comment type="subcellular location">
    <subcellularLocation>
        <location evidence="1">Cell membrane</location>
        <topology evidence="1">Peripheral membrane protein</topology>
    </subcellularLocation>
</comment>
<comment type="similarity">
    <text evidence="1">Belongs to the UbiD family.</text>
</comment>
<dbReference type="EC" id="4.1.1.98" evidence="1"/>
<dbReference type="EMBL" id="FM209186">
    <property type="protein sequence ID" value="CAW30385.1"/>
    <property type="molecule type" value="Genomic_DNA"/>
</dbReference>
<dbReference type="RefSeq" id="WP_003096332.1">
    <property type="nucleotide sequence ID" value="NC_011770.1"/>
</dbReference>
<dbReference type="SMR" id="B7V5C7"/>
<dbReference type="KEGG" id="pag:PLES_56311"/>
<dbReference type="HOGENOM" id="CLU_023348_4_1_6"/>
<dbReference type="UniPathway" id="UPA00232"/>
<dbReference type="GO" id="GO:0005829">
    <property type="term" value="C:cytosol"/>
    <property type="evidence" value="ECO:0007669"/>
    <property type="project" value="TreeGrafter"/>
</dbReference>
<dbReference type="GO" id="GO:0005886">
    <property type="term" value="C:plasma membrane"/>
    <property type="evidence" value="ECO:0007669"/>
    <property type="project" value="UniProtKB-SubCell"/>
</dbReference>
<dbReference type="GO" id="GO:0008694">
    <property type="term" value="F:3-octaprenyl-4-hydroxybenzoate carboxy-lyase activity"/>
    <property type="evidence" value="ECO:0007669"/>
    <property type="project" value="UniProtKB-UniRule"/>
</dbReference>
<dbReference type="GO" id="GO:0046872">
    <property type="term" value="F:metal ion binding"/>
    <property type="evidence" value="ECO:0007669"/>
    <property type="project" value="UniProtKB-KW"/>
</dbReference>
<dbReference type="GO" id="GO:0006744">
    <property type="term" value="P:ubiquinone biosynthetic process"/>
    <property type="evidence" value="ECO:0007669"/>
    <property type="project" value="UniProtKB-UniRule"/>
</dbReference>
<dbReference type="FunFam" id="1.20.5.570:FF:000001">
    <property type="entry name" value="3-octaprenyl-4-hydroxybenzoate carboxy-lyase"/>
    <property type="match status" value="1"/>
</dbReference>
<dbReference type="FunFam" id="3.40.1670.10:FF:000001">
    <property type="entry name" value="3-octaprenyl-4-hydroxybenzoate carboxy-lyase"/>
    <property type="match status" value="1"/>
</dbReference>
<dbReference type="Gene3D" id="1.20.5.570">
    <property type="entry name" value="Single helix bin"/>
    <property type="match status" value="1"/>
</dbReference>
<dbReference type="Gene3D" id="3.40.1670.10">
    <property type="entry name" value="UbiD C-terminal domain-like"/>
    <property type="match status" value="1"/>
</dbReference>
<dbReference type="HAMAP" id="MF_01636">
    <property type="entry name" value="UbiD"/>
    <property type="match status" value="1"/>
</dbReference>
<dbReference type="InterPro" id="IPR002830">
    <property type="entry name" value="UbiD"/>
</dbReference>
<dbReference type="InterPro" id="IPR049381">
    <property type="entry name" value="UbiD-like_C"/>
</dbReference>
<dbReference type="InterPro" id="IPR049383">
    <property type="entry name" value="UbiD-like_N"/>
</dbReference>
<dbReference type="InterPro" id="IPR023677">
    <property type="entry name" value="UbiD_bacteria"/>
</dbReference>
<dbReference type="InterPro" id="IPR048304">
    <property type="entry name" value="UbiD_Rift_dom"/>
</dbReference>
<dbReference type="NCBIfam" id="NF008175">
    <property type="entry name" value="PRK10922.1"/>
    <property type="match status" value="1"/>
</dbReference>
<dbReference type="NCBIfam" id="TIGR00148">
    <property type="entry name" value="UbiD family decarboxylase"/>
    <property type="match status" value="1"/>
</dbReference>
<dbReference type="PANTHER" id="PTHR30108">
    <property type="entry name" value="3-OCTAPRENYL-4-HYDROXYBENZOATE CARBOXY-LYASE-RELATED"/>
    <property type="match status" value="1"/>
</dbReference>
<dbReference type="PANTHER" id="PTHR30108:SF17">
    <property type="entry name" value="FERULIC ACID DECARBOXYLASE 1"/>
    <property type="match status" value="1"/>
</dbReference>
<dbReference type="Pfam" id="PF01977">
    <property type="entry name" value="UbiD"/>
    <property type="match status" value="1"/>
</dbReference>
<dbReference type="Pfam" id="PF20696">
    <property type="entry name" value="UbiD_C"/>
    <property type="match status" value="1"/>
</dbReference>
<dbReference type="Pfam" id="PF20695">
    <property type="entry name" value="UbiD_N"/>
    <property type="match status" value="1"/>
</dbReference>
<dbReference type="SUPFAM" id="SSF50475">
    <property type="entry name" value="FMN-binding split barrel"/>
    <property type="match status" value="1"/>
</dbReference>
<dbReference type="SUPFAM" id="SSF143968">
    <property type="entry name" value="UbiD C-terminal domain-like"/>
    <property type="match status" value="1"/>
</dbReference>
<evidence type="ECO:0000255" key="1">
    <source>
        <dbReference type="HAMAP-Rule" id="MF_01636"/>
    </source>
</evidence>
<gene>
    <name evidence="1" type="primary">ubiD</name>
    <name type="ordered locus">PLES_56311</name>
</gene>